<proteinExistence type="inferred from homology"/>
<name>YCAR_ECO57</name>
<accession>P0AAZ9</accession>
<accession>P75844</accession>
<evidence type="ECO:0000255" key="1">
    <source>
        <dbReference type="HAMAP-Rule" id="MF_01187"/>
    </source>
</evidence>
<protein>
    <recommendedName>
        <fullName evidence="1">UPF0434 protein YcaR</fullName>
    </recommendedName>
</protein>
<reference key="1">
    <citation type="journal article" date="2001" name="Nature">
        <title>Genome sequence of enterohaemorrhagic Escherichia coli O157:H7.</title>
        <authorList>
            <person name="Perna N.T."/>
            <person name="Plunkett G. III"/>
            <person name="Burland V."/>
            <person name="Mau B."/>
            <person name="Glasner J.D."/>
            <person name="Rose D.J."/>
            <person name="Mayhew G.F."/>
            <person name="Evans P.S."/>
            <person name="Gregor J."/>
            <person name="Kirkpatrick H.A."/>
            <person name="Posfai G."/>
            <person name="Hackett J."/>
            <person name="Klink S."/>
            <person name="Boutin A."/>
            <person name="Shao Y."/>
            <person name="Miller L."/>
            <person name="Grotbeck E.J."/>
            <person name="Davis N.W."/>
            <person name="Lim A."/>
            <person name="Dimalanta E.T."/>
            <person name="Potamousis K."/>
            <person name="Apodaca J."/>
            <person name="Anantharaman T.S."/>
            <person name="Lin J."/>
            <person name="Yen G."/>
            <person name="Schwartz D.C."/>
            <person name="Welch R.A."/>
            <person name="Blattner F.R."/>
        </authorList>
    </citation>
    <scope>NUCLEOTIDE SEQUENCE [LARGE SCALE GENOMIC DNA]</scope>
    <source>
        <strain>O157:H7 / EDL933 / ATCC 700927 / EHEC</strain>
    </source>
</reference>
<reference key="2">
    <citation type="journal article" date="2001" name="DNA Res.">
        <title>Complete genome sequence of enterohemorrhagic Escherichia coli O157:H7 and genomic comparison with a laboratory strain K-12.</title>
        <authorList>
            <person name="Hayashi T."/>
            <person name="Makino K."/>
            <person name="Ohnishi M."/>
            <person name="Kurokawa K."/>
            <person name="Ishii K."/>
            <person name="Yokoyama K."/>
            <person name="Han C.-G."/>
            <person name="Ohtsubo E."/>
            <person name="Nakayama K."/>
            <person name="Murata T."/>
            <person name="Tanaka M."/>
            <person name="Tobe T."/>
            <person name="Iida T."/>
            <person name="Takami H."/>
            <person name="Honda T."/>
            <person name="Sasakawa C."/>
            <person name="Ogasawara N."/>
            <person name="Yasunaga T."/>
            <person name="Kuhara S."/>
            <person name="Shiba T."/>
            <person name="Hattori M."/>
            <person name="Shinagawa H."/>
        </authorList>
    </citation>
    <scope>NUCLEOTIDE SEQUENCE [LARGE SCALE GENOMIC DNA]</scope>
    <source>
        <strain>O157:H7 / Sakai / RIMD 0509952 / EHEC</strain>
    </source>
</reference>
<comment type="similarity">
    <text evidence="1">Belongs to the UPF0434 family.</text>
</comment>
<organism>
    <name type="scientific">Escherichia coli O157:H7</name>
    <dbReference type="NCBI Taxonomy" id="83334"/>
    <lineage>
        <taxon>Bacteria</taxon>
        <taxon>Pseudomonadati</taxon>
        <taxon>Pseudomonadota</taxon>
        <taxon>Gammaproteobacteria</taxon>
        <taxon>Enterobacterales</taxon>
        <taxon>Enterobacteriaceae</taxon>
        <taxon>Escherichia</taxon>
    </lineage>
</organism>
<keyword id="KW-1185">Reference proteome</keyword>
<sequence length="60" mass="6855">MDHRLLEIIACPVCNGKLWYNQEKQELICKLDNLAFPLRDGIPVLLETEARVLTADESKS</sequence>
<dbReference type="EMBL" id="AE005174">
    <property type="protein sequence ID" value="AAG55402.1"/>
    <property type="molecule type" value="Genomic_DNA"/>
</dbReference>
<dbReference type="EMBL" id="BA000007">
    <property type="protein sequence ID" value="BAB34423.1"/>
    <property type="molecule type" value="Genomic_DNA"/>
</dbReference>
<dbReference type="PIR" id="F85617">
    <property type="entry name" value="F85617"/>
</dbReference>
<dbReference type="PIR" id="H90753">
    <property type="entry name" value="H90753"/>
</dbReference>
<dbReference type="RefSeq" id="NP_309027.1">
    <property type="nucleotide sequence ID" value="NC_002695.1"/>
</dbReference>
<dbReference type="RefSeq" id="WP_000350058.1">
    <property type="nucleotide sequence ID" value="NZ_VOAI01000006.1"/>
</dbReference>
<dbReference type="SMR" id="P0AAZ9"/>
<dbReference type="STRING" id="155864.Z1263"/>
<dbReference type="GeneID" id="917739"/>
<dbReference type="GeneID" id="93776498"/>
<dbReference type="KEGG" id="ece:Z1263"/>
<dbReference type="KEGG" id="ecs:ECs_1000"/>
<dbReference type="PATRIC" id="fig|386585.9.peg.1120"/>
<dbReference type="eggNOG" id="COG2835">
    <property type="taxonomic scope" value="Bacteria"/>
</dbReference>
<dbReference type="HOGENOM" id="CLU_155659_3_1_6"/>
<dbReference type="OMA" id="ELICHAD"/>
<dbReference type="Proteomes" id="UP000000558">
    <property type="component" value="Chromosome"/>
</dbReference>
<dbReference type="Proteomes" id="UP000002519">
    <property type="component" value="Chromosome"/>
</dbReference>
<dbReference type="GO" id="GO:0005829">
    <property type="term" value="C:cytosol"/>
    <property type="evidence" value="ECO:0007669"/>
    <property type="project" value="TreeGrafter"/>
</dbReference>
<dbReference type="FunFam" id="2.20.25.10:FF:000002">
    <property type="entry name" value="UPF0434 protein YcaR"/>
    <property type="match status" value="1"/>
</dbReference>
<dbReference type="Gene3D" id="2.20.25.10">
    <property type="match status" value="1"/>
</dbReference>
<dbReference type="HAMAP" id="MF_01187">
    <property type="entry name" value="UPF0434"/>
    <property type="match status" value="1"/>
</dbReference>
<dbReference type="InterPro" id="IPR005651">
    <property type="entry name" value="Trm112-like"/>
</dbReference>
<dbReference type="NCBIfam" id="NF008806">
    <property type="entry name" value="PRK11827.1"/>
    <property type="match status" value="1"/>
</dbReference>
<dbReference type="PANTHER" id="PTHR33505:SF4">
    <property type="entry name" value="PROTEIN PREY, MITOCHONDRIAL"/>
    <property type="match status" value="1"/>
</dbReference>
<dbReference type="PANTHER" id="PTHR33505">
    <property type="entry name" value="ZGC:162634"/>
    <property type="match status" value="1"/>
</dbReference>
<dbReference type="Pfam" id="PF03966">
    <property type="entry name" value="Trm112p"/>
    <property type="match status" value="1"/>
</dbReference>
<dbReference type="SUPFAM" id="SSF158997">
    <property type="entry name" value="Trm112p-like"/>
    <property type="match status" value="1"/>
</dbReference>
<feature type="chain" id="PRO_0000168763" description="UPF0434 protein YcaR">
    <location>
        <begin position="1"/>
        <end position="60"/>
    </location>
</feature>
<gene>
    <name evidence="1" type="primary">ycaR</name>
    <name type="ordered locus">Z1263</name>
    <name type="ordered locus">ECs1000</name>
</gene>